<dbReference type="EMBL" id="CP001016">
    <property type="protein sequence ID" value="ACB95669.1"/>
    <property type="molecule type" value="Genomic_DNA"/>
</dbReference>
<dbReference type="RefSeq" id="WP_012385025.1">
    <property type="nucleotide sequence ID" value="NC_010581.1"/>
</dbReference>
<dbReference type="STRING" id="395963.Bind_2047"/>
<dbReference type="KEGG" id="bid:Bind_2047"/>
<dbReference type="eggNOG" id="ENOG5032TZQ">
    <property type="taxonomic scope" value="Bacteria"/>
</dbReference>
<dbReference type="HOGENOM" id="CLU_149349_0_0_5"/>
<dbReference type="OrthoDB" id="7689335at2"/>
<dbReference type="Proteomes" id="UP000001695">
    <property type="component" value="Chromosome"/>
</dbReference>
<dbReference type="GO" id="GO:0009399">
    <property type="term" value="P:nitrogen fixation"/>
    <property type="evidence" value="ECO:0007669"/>
    <property type="project" value="UniProtKB-UniRule"/>
</dbReference>
<dbReference type="HAMAP" id="MF_02117">
    <property type="entry name" value="CowN"/>
    <property type="match status" value="1"/>
</dbReference>
<dbReference type="InterPro" id="IPR024899">
    <property type="entry name" value="CowN"/>
</dbReference>
<dbReference type="NCBIfam" id="NF033689">
    <property type="entry name" value="N2Fix_CO_CowN"/>
    <property type="match status" value="1"/>
</dbReference>
<dbReference type="Pfam" id="PF20543">
    <property type="entry name" value="CowN"/>
    <property type="match status" value="1"/>
</dbReference>
<accession>B2IFA4</accession>
<gene>
    <name evidence="1" type="primary">cowN</name>
    <name type="ordered locus">Bind_2047</name>
</gene>
<name>COWN_BEII9</name>
<comment type="function">
    <text evidence="1">Is required to sustain N(2)-dependent growth in the presence of low levels of carbon monoxide (CO). Probably acts by protecting the N(2) fixation ability of the nitrogenase complex, which is inactivated in the presence of CO.</text>
</comment>
<comment type="similarity">
    <text evidence="1">Belongs to the CowN family.</text>
</comment>
<feature type="chain" id="PRO_0000407253" description="N(2)-fixation sustaining protein CowN">
    <location>
        <begin position="1"/>
        <end position="91"/>
    </location>
</feature>
<keyword id="KW-0535">Nitrogen fixation</keyword>
<keyword id="KW-1185">Reference proteome</keyword>
<evidence type="ECO:0000255" key="1">
    <source>
        <dbReference type="HAMAP-Rule" id="MF_02117"/>
    </source>
</evidence>
<proteinExistence type="inferred from homology"/>
<reference key="1">
    <citation type="journal article" date="2010" name="J. Bacteriol.">
        <title>Complete genome sequence of Beijerinckia indica subsp. indica.</title>
        <authorList>
            <person name="Tamas I."/>
            <person name="Dedysh S.N."/>
            <person name="Liesack W."/>
            <person name="Stott M.B."/>
            <person name="Alam M."/>
            <person name="Murrell J.C."/>
            <person name="Dunfield P.F."/>
        </authorList>
    </citation>
    <scope>NUCLEOTIDE SEQUENCE [LARGE SCALE GENOMIC DNA]</scope>
    <source>
        <strain>ATCC 9039 / DSM 1715 / NCIMB 8712</strain>
    </source>
</reference>
<organism>
    <name type="scientific">Beijerinckia indica subsp. indica (strain ATCC 9039 / DSM 1715 / NCIMB 8712)</name>
    <dbReference type="NCBI Taxonomy" id="395963"/>
    <lineage>
        <taxon>Bacteria</taxon>
        <taxon>Pseudomonadati</taxon>
        <taxon>Pseudomonadota</taxon>
        <taxon>Alphaproteobacteria</taxon>
        <taxon>Hyphomicrobiales</taxon>
        <taxon>Beijerinckiaceae</taxon>
        <taxon>Beijerinckia</taxon>
    </lineage>
</organism>
<protein>
    <recommendedName>
        <fullName evidence="1">N(2)-fixation sustaining protein CowN</fullName>
    </recommendedName>
    <alternativeName>
        <fullName evidence="1">CO weal-nitrogenase</fullName>
    </alternativeName>
</protein>
<sequence length="91" mass="10739">MTAQVDRYVSFKGIDWVGRSREIFARLQSHIDQANSPFWPYFTRQRKLAHSQGLDDLRVLHNYLPTLRELLENMGDLKTLGMLEELEQICM</sequence>